<comment type="function">
    <text evidence="1">The UvrABC repair system catalyzes the recognition and processing of DNA lesions. UvrC both incises the 5' and 3' sides of the lesion. The N-terminal half is responsible for the 3' incision and the C-terminal half is responsible for the 5' incision.</text>
</comment>
<comment type="subunit">
    <text evidence="1">Interacts with UvrB in an incision complex.</text>
</comment>
<comment type="subcellular location">
    <subcellularLocation>
        <location evidence="1">Cytoplasm</location>
    </subcellularLocation>
</comment>
<comment type="similarity">
    <text evidence="1">Belongs to the UvrC family.</text>
</comment>
<accession>A6VQ29</accession>
<gene>
    <name evidence="1" type="primary">uvrC</name>
    <name type="ordered locus">Asuc_1724</name>
</gene>
<feature type="chain" id="PRO_1000077747" description="UvrABC system protein C">
    <location>
        <begin position="1"/>
        <end position="608"/>
    </location>
</feature>
<feature type="domain" description="GIY-YIG" evidence="1">
    <location>
        <begin position="13"/>
        <end position="91"/>
    </location>
</feature>
<feature type="domain" description="UVR" evidence="1">
    <location>
        <begin position="201"/>
        <end position="236"/>
    </location>
</feature>
<protein>
    <recommendedName>
        <fullName evidence="1">UvrABC system protein C</fullName>
        <shortName evidence="1">Protein UvrC</shortName>
    </recommendedName>
    <alternativeName>
        <fullName evidence="1">Excinuclease ABC subunit C</fullName>
    </alternativeName>
</protein>
<reference key="1">
    <citation type="journal article" date="2010" name="BMC Genomics">
        <title>A genomic perspective on the potential of Actinobacillus succinogenes for industrial succinate production.</title>
        <authorList>
            <person name="McKinlay J.B."/>
            <person name="Laivenieks M."/>
            <person name="Schindler B.D."/>
            <person name="McKinlay A.A."/>
            <person name="Siddaramappa S."/>
            <person name="Challacombe J.F."/>
            <person name="Lowry S.R."/>
            <person name="Clum A."/>
            <person name="Lapidus A.L."/>
            <person name="Burkhart K.B."/>
            <person name="Harkins V."/>
            <person name="Vieille C."/>
        </authorList>
    </citation>
    <scope>NUCLEOTIDE SEQUENCE [LARGE SCALE GENOMIC DNA]</scope>
    <source>
        <strain>ATCC 55618 / DSM 22257 / CCUG 43843 / 130Z</strain>
    </source>
</reference>
<dbReference type="EMBL" id="CP000746">
    <property type="protein sequence ID" value="ABR75076.1"/>
    <property type="molecule type" value="Genomic_DNA"/>
</dbReference>
<dbReference type="RefSeq" id="WP_012073453.1">
    <property type="nucleotide sequence ID" value="NC_009655.1"/>
</dbReference>
<dbReference type="SMR" id="A6VQ29"/>
<dbReference type="STRING" id="339671.Asuc_1724"/>
<dbReference type="KEGG" id="asu:Asuc_1724"/>
<dbReference type="eggNOG" id="COG0322">
    <property type="taxonomic scope" value="Bacteria"/>
</dbReference>
<dbReference type="HOGENOM" id="CLU_014841_3_2_6"/>
<dbReference type="OrthoDB" id="9804933at2"/>
<dbReference type="Proteomes" id="UP000001114">
    <property type="component" value="Chromosome"/>
</dbReference>
<dbReference type="GO" id="GO:0005737">
    <property type="term" value="C:cytoplasm"/>
    <property type="evidence" value="ECO:0007669"/>
    <property type="project" value="UniProtKB-SubCell"/>
</dbReference>
<dbReference type="GO" id="GO:0009380">
    <property type="term" value="C:excinuclease repair complex"/>
    <property type="evidence" value="ECO:0007669"/>
    <property type="project" value="InterPro"/>
</dbReference>
<dbReference type="GO" id="GO:0003677">
    <property type="term" value="F:DNA binding"/>
    <property type="evidence" value="ECO:0007669"/>
    <property type="project" value="UniProtKB-UniRule"/>
</dbReference>
<dbReference type="GO" id="GO:0009381">
    <property type="term" value="F:excinuclease ABC activity"/>
    <property type="evidence" value="ECO:0007669"/>
    <property type="project" value="UniProtKB-UniRule"/>
</dbReference>
<dbReference type="GO" id="GO:0006289">
    <property type="term" value="P:nucleotide-excision repair"/>
    <property type="evidence" value="ECO:0007669"/>
    <property type="project" value="UniProtKB-UniRule"/>
</dbReference>
<dbReference type="GO" id="GO:0009432">
    <property type="term" value="P:SOS response"/>
    <property type="evidence" value="ECO:0007669"/>
    <property type="project" value="UniProtKB-UniRule"/>
</dbReference>
<dbReference type="CDD" id="cd10434">
    <property type="entry name" value="GIY-YIG_UvrC_Cho"/>
    <property type="match status" value="1"/>
</dbReference>
<dbReference type="FunFam" id="1.10.150.20:FF:000005">
    <property type="entry name" value="UvrABC system protein C"/>
    <property type="match status" value="1"/>
</dbReference>
<dbReference type="FunFam" id="3.30.420.340:FF:000001">
    <property type="entry name" value="UvrABC system protein C"/>
    <property type="match status" value="1"/>
</dbReference>
<dbReference type="FunFam" id="3.40.1440.10:FF:000001">
    <property type="entry name" value="UvrABC system protein C"/>
    <property type="match status" value="1"/>
</dbReference>
<dbReference type="FunFam" id="4.10.860.10:FF:000002">
    <property type="entry name" value="UvrABC system protein C"/>
    <property type="match status" value="1"/>
</dbReference>
<dbReference type="Gene3D" id="1.10.150.20">
    <property type="entry name" value="5' to 3' exonuclease, C-terminal subdomain"/>
    <property type="match status" value="1"/>
</dbReference>
<dbReference type="Gene3D" id="3.40.1440.10">
    <property type="entry name" value="GIY-YIG endonuclease"/>
    <property type="match status" value="1"/>
</dbReference>
<dbReference type="Gene3D" id="4.10.860.10">
    <property type="entry name" value="UVR domain"/>
    <property type="match status" value="1"/>
</dbReference>
<dbReference type="Gene3D" id="3.30.420.340">
    <property type="entry name" value="UvrC, RNAse H endonuclease domain"/>
    <property type="match status" value="1"/>
</dbReference>
<dbReference type="HAMAP" id="MF_00203">
    <property type="entry name" value="UvrC"/>
    <property type="match status" value="1"/>
</dbReference>
<dbReference type="InterPro" id="IPR000305">
    <property type="entry name" value="GIY-YIG_endonuc"/>
</dbReference>
<dbReference type="InterPro" id="IPR035901">
    <property type="entry name" value="GIY-YIG_endonuc_sf"/>
</dbReference>
<dbReference type="InterPro" id="IPR047296">
    <property type="entry name" value="GIY-YIG_UvrC_Cho"/>
</dbReference>
<dbReference type="InterPro" id="IPR003583">
    <property type="entry name" value="Hlx-hairpin-Hlx_DNA-bd_motif"/>
</dbReference>
<dbReference type="InterPro" id="IPR010994">
    <property type="entry name" value="RuvA_2-like"/>
</dbReference>
<dbReference type="InterPro" id="IPR001943">
    <property type="entry name" value="UVR_dom"/>
</dbReference>
<dbReference type="InterPro" id="IPR036876">
    <property type="entry name" value="UVR_dom_sf"/>
</dbReference>
<dbReference type="InterPro" id="IPR050066">
    <property type="entry name" value="UvrABC_protein_C"/>
</dbReference>
<dbReference type="InterPro" id="IPR004791">
    <property type="entry name" value="UvrC"/>
</dbReference>
<dbReference type="InterPro" id="IPR001162">
    <property type="entry name" value="UvrC_RNase_H_dom"/>
</dbReference>
<dbReference type="InterPro" id="IPR038476">
    <property type="entry name" value="UvrC_RNase_H_dom_sf"/>
</dbReference>
<dbReference type="NCBIfam" id="NF001824">
    <property type="entry name" value="PRK00558.1-5"/>
    <property type="match status" value="1"/>
</dbReference>
<dbReference type="NCBIfam" id="TIGR00194">
    <property type="entry name" value="uvrC"/>
    <property type="match status" value="1"/>
</dbReference>
<dbReference type="PANTHER" id="PTHR30562:SF1">
    <property type="entry name" value="UVRABC SYSTEM PROTEIN C"/>
    <property type="match status" value="1"/>
</dbReference>
<dbReference type="PANTHER" id="PTHR30562">
    <property type="entry name" value="UVRC/OXIDOREDUCTASE"/>
    <property type="match status" value="1"/>
</dbReference>
<dbReference type="Pfam" id="PF01541">
    <property type="entry name" value="GIY-YIG"/>
    <property type="match status" value="1"/>
</dbReference>
<dbReference type="Pfam" id="PF14520">
    <property type="entry name" value="HHH_5"/>
    <property type="match status" value="1"/>
</dbReference>
<dbReference type="Pfam" id="PF02151">
    <property type="entry name" value="UVR"/>
    <property type="match status" value="1"/>
</dbReference>
<dbReference type="Pfam" id="PF22920">
    <property type="entry name" value="UvrC_RNaseH"/>
    <property type="match status" value="1"/>
</dbReference>
<dbReference type="Pfam" id="PF08459">
    <property type="entry name" value="UvrC_RNaseH_dom"/>
    <property type="match status" value="1"/>
</dbReference>
<dbReference type="SMART" id="SM00465">
    <property type="entry name" value="GIYc"/>
    <property type="match status" value="1"/>
</dbReference>
<dbReference type="SMART" id="SM00278">
    <property type="entry name" value="HhH1"/>
    <property type="match status" value="2"/>
</dbReference>
<dbReference type="SUPFAM" id="SSF46600">
    <property type="entry name" value="C-terminal UvrC-binding domain of UvrB"/>
    <property type="match status" value="1"/>
</dbReference>
<dbReference type="SUPFAM" id="SSF82771">
    <property type="entry name" value="GIY-YIG endonuclease"/>
    <property type="match status" value="1"/>
</dbReference>
<dbReference type="SUPFAM" id="SSF47781">
    <property type="entry name" value="RuvA domain 2-like"/>
    <property type="match status" value="1"/>
</dbReference>
<dbReference type="PROSITE" id="PS50164">
    <property type="entry name" value="GIY_YIG"/>
    <property type="match status" value="1"/>
</dbReference>
<dbReference type="PROSITE" id="PS50151">
    <property type="entry name" value="UVR"/>
    <property type="match status" value="1"/>
</dbReference>
<dbReference type="PROSITE" id="PS50165">
    <property type="entry name" value="UVRC"/>
    <property type="match status" value="1"/>
</dbReference>
<name>UVRC_ACTSZ</name>
<evidence type="ECO:0000255" key="1">
    <source>
        <dbReference type="HAMAP-Rule" id="MF_00203"/>
    </source>
</evidence>
<organism>
    <name type="scientific">Actinobacillus succinogenes (strain ATCC 55618 / DSM 22257 / CCUG 43843 / 130Z)</name>
    <dbReference type="NCBI Taxonomy" id="339671"/>
    <lineage>
        <taxon>Bacteria</taxon>
        <taxon>Pseudomonadati</taxon>
        <taxon>Pseudomonadota</taxon>
        <taxon>Gammaproteobacteria</taxon>
        <taxon>Pasteurellales</taxon>
        <taxon>Pasteurellaceae</taxon>
        <taxon>Actinobacillus</taxon>
    </lineage>
</organism>
<proteinExistence type="inferred from homology"/>
<keyword id="KW-0963">Cytoplasm</keyword>
<keyword id="KW-0227">DNA damage</keyword>
<keyword id="KW-0228">DNA excision</keyword>
<keyword id="KW-0234">DNA repair</keyword>
<keyword id="KW-0267">Excision nuclease</keyword>
<keyword id="KW-1185">Reference proteome</keyword>
<keyword id="KW-0742">SOS response</keyword>
<sequence>MFDSKAFLKNVPHDPGVYRMFDKTDTVIYVGKAKDLKKRLSSYFRPNLSSKKTEALVASITRIETTITTSETEALLLEHNYIKTFQPRYNVLLRDDKSYPYILLTKERHPRIAAYRGAKKIQGEYFGPYPHAGAVRETLSLLQKLFPIRQCENSVYKNRSRPCLQYQIGRCCAPCVAGYVTDEEYQAQVEYARLFLQGKDQQVLDHLIAKMETASRALDFENAARFRDQIQAVRAVIEKQFVSNDRLDDMDIISIAYRHGVACVQVLFIRQGKVLGNRSYFPKVPANTDLSELTATFVGQFYLQAHQGRTVPNSIVVDHKLEAKEEIEQLLSEQAGRKVSIQDNAKGSKSKYLSLAQMNAKAALTLKLKESTLISERYRALRELLDMDKINRMECFDISHTMGEQTIASCVVFNDAGPFKSEYRRFNIEGITGGDDYAAMEQALKKRYDRDLTPEKIPDIIFIDGGKGQLNRALKAFGELNVKWDKNRPHLIGIAKGVDRRAGQETLILSKTGREVNLDPDNLALHLIQHIRDESHNHAISGHRKKRQKAFTQSGLETIEGVGPKRRQALLKYLGGMQGVKNATLEEIASVPGISRALAEIIFETLKH</sequence>